<sequence length="364" mass="38208">MNADIDDVLALVRPDLQAFAGYSSARSAAVQGEVWLNANESAWANPADAAGNSRRYPEPQPLALREGLAALYGVTPPQLLIGRGSDEAIDLLVRALCVPGRDGVLVTPPVFGMYAVCARLQGAALIEVPLVDTEDGLRADLDAVIDTAKSRNAKLVFLCAPSNPAGSDIALDEIERVATALRGQALVVVDEAYVEYAQRPSAATLLAAHANLAVLRTLSKAHALAAARIGSLIAAPELIAVLRRCQAPYPVPTPCAELAVQALQPAGLARTAERVATVIAERERLFAALPGLPGVRRVYRSAGNYLLVRFADAQAAFDTLLAAGVVVRDQRAAPQLGDALRISIGSPEENDRVLAALSARRAAA</sequence>
<reference key="1">
    <citation type="submission" date="2008-06" db="EMBL/GenBank/DDBJ databases">
        <title>Complete sequence of Stenotrophomonas maltophilia R551-3.</title>
        <authorList>
            <consortium name="US DOE Joint Genome Institute"/>
            <person name="Lucas S."/>
            <person name="Copeland A."/>
            <person name="Lapidus A."/>
            <person name="Glavina del Rio T."/>
            <person name="Dalin E."/>
            <person name="Tice H."/>
            <person name="Pitluck S."/>
            <person name="Chain P."/>
            <person name="Malfatti S."/>
            <person name="Shin M."/>
            <person name="Vergez L."/>
            <person name="Lang D."/>
            <person name="Schmutz J."/>
            <person name="Larimer F."/>
            <person name="Land M."/>
            <person name="Hauser L."/>
            <person name="Kyrpides N."/>
            <person name="Mikhailova N."/>
            <person name="Taghavi S."/>
            <person name="Monchy S."/>
            <person name="Newman L."/>
            <person name="Vangronsveld J."/>
            <person name="van der Lelie D."/>
            <person name="Richardson P."/>
        </authorList>
    </citation>
    <scope>NUCLEOTIDE SEQUENCE [LARGE SCALE GENOMIC DNA]</scope>
    <source>
        <strain>R551-3</strain>
    </source>
</reference>
<feature type="chain" id="PRO_1000135425" description="Histidinol-phosphate aminotransferase">
    <location>
        <begin position="1"/>
        <end position="364"/>
    </location>
</feature>
<feature type="modified residue" description="N6-(pyridoxal phosphate)lysine" evidence="1">
    <location>
        <position position="220"/>
    </location>
</feature>
<dbReference type="EC" id="2.6.1.9" evidence="1"/>
<dbReference type="EMBL" id="CP001111">
    <property type="protein sequence ID" value="ACF51462.1"/>
    <property type="molecule type" value="Genomic_DNA"/>
</dbReference>
<dbReference type="RefSeq" id="WP_012510884.1">
    <property type="nucleotide sequence ID" value="NC_011071.1"/>
</dbReference>
<dbReference type="SMR" id="B4STN8"/>
<dbReference type="STRING" id="391008.Smal_1758"/>
<dbReference type="KEGG" id="smt:Smal_1758"/>
<dbReference type="eggNOG" id="COG0079">
    <property type="taxonomic scope" value="Bacteria"/>
</dbReference>
<dbReference type="HOGENOM" id="CLU_017584_3_1_6"/>
<dbReference type="OrthoDB" id="9813612at2"/>
<dbReference type="UniPathway" id="UPA00031">
    <property type="reaction ID" value="UER00012"/>
</dbReference>
<dbReference type="Proteomes" id="UP000001867">
    <property type="component" value="Chromosome"/>
</dbReference>
<dbReference type="GO" id="GO:0004400">
    <property type="term" value="F:histidinol-phosphate transaminase activity"/>
    <property type="evidence" value="ECO:0007669"/>
    <property type="project" value="UniProtKB-UniRule"/>
</dbReference>
<dbReference type="GO" id="GO:0030170">
    <property type="term" value="F:pyridoxal phosphate binding"/>
    <property type="evidence" value="ECO:0007669"/>
    <property type="project" value="InterPro"/>
</dbReference>
<dbReference type="GO" id="GO:0000105">
    <property type="term" value="P:L-histidine biosynthetic process"/>
    <property type="evidence" value="ECO:0007669"/>
    <property type="project" value="UniProtKB-UniRule"/>
</dbReference>
<dbReference type="CDD" id="cd00609">
    <property type="entry name" value="AAT_like"/>
    <property type="match status" value="1"/>
</dbReference>
<dbReference type="Gene3D" id="3.90.1150.10">
    <property type="entry name" value="Aspartate Aminotransferase, domain 1"/>
    <property type="match status" value="1"/>
</dbReference>
<dbReference type="Gene3D" id="3.40.640.10">
    <property type="entry name" value="Type I PLP-dependent aspartate aminotransferase-like (Major domain)"/>
    <property type="match status" value="1"/>
</dbReference>
<dbReference type="HAMAP" id="MF_01023">
    <property type="entry name" value="HisC_aminotrans_2"/>
    <property type="match status" value="1"/>
</dbReference>
<dbReference type="InterPro" id="IPR004839">
    <property type="entry name" value="Aminotransferase_I/II_large"/>
</dbReference>
<dbReference type="InterPro" id="IPR005861">
    <property type="entry name" value="HisP_aminotrans"/>
</dbReference>
<dbReference type="InterPro" id="IPR015424">
    <property type="entry name" value="PyrdxlP-dep_Trfase"/>
</dbReference>
<dbReference type="InterPro" id="IPR015421">
    <property type="entry name" value="PyrdxlP-dep_Trfase_major"/>
</dbReference>
<dbReference type="InterPro" id="IPR015422">
    <property type="entry name" value="PyrdxlP-dep_Trfase_small"/>
</dbReference>
<dbReference type="NCBIfam" id="TIGR01141">
    <property type="entry name" value="hisC"/>
    <property type="match status" value="1"/>
</dbReference>
<dbReference type="PANTHER" id="PTHR42885:SF2">
    <property type="entry name" value="HISTIDINOL-PHOSPHATE AMINOTRANSFERASE"/>
    <property type="match status" value="1"/>
</dbReference>
<dbReference type="PANTHER" id="PTHR42885">
    <property type="entry name" value="HISTIDINOL-PHOSPHATE AMINOTRANSFERASE-RELATED"/>
    <property type="match status" value="1"/>
</dbReference>
<dbReference type="Pfam" id="PF00155">
    <property type="entry name" value="Aminotran_1_2"/>
    <property type="match status" value="1"/>
</dbReference>
<dbReference type="SUPFAM" id="SSF53383">
    <property type="entry name" value="PLP-dependent transferases"/>
    <property type="match status" value="1"/>
</dbReference>
<gene>
    <name evidence="1" type="primary">hisC</name>
    <name type="ordered locus">Smal_1758</name>
</gene>
<name>HIS8_STRM5</name>
<accession>B4STN8</accession>
<organism>
    <name type="scientific">Stenotrophomonas maltophilia (strain R551-3)</name>
    <dbReference type="NCBI Taxonomy" id="391008"/>
    <lineage>
        <taxon>Bacteria</taxon>
        <taxon>Pseudomonadati</taxon>
        <taxon>Pseudomonadota</taxon>
        <taxon>Gammaproteobacteria</taxon>
        <taxon>Lysobacterales</taxon>
        <taxon>Lysobacteraceae</taxon>
        <taxon>Stenotrophomonas</taxon>
        <taxon>Stenotrophomonas maltophilia group</taxon>
    </lineage>
</organism>
<protein>
    <recommendedName>
        <fullName evidence="1">Histidinol-phosphate aminotransferase</fullName>
        <ecNumber evidence="1">2.6.1.9</ecNumber>
    </recommendedName>
    <alternativeName>
        <fullName evidence="1">Imidazole acetol-phosphate transaminase</fullName>
    </alternativeName>
</protein>
<keyword id="KW-0028">Amino-acid biosynthesis</keyword>
<keyword id="KW-0032">Aminotransferase</keyword>
<keyword id="KW-0368">Histidine biosynthesis</keyword>
<keyword id="KW-0663">Pyridoxal phosphate</keyword>
<keyword id="KW-0808">Transferase</keyword>
<comment type="catalytic activity">
    <reaction evidence="1">
        <text>L-histidinol phosphate + 2-oxoglutarate = 3-(imidazol-4-yl)-2-oxopropyl phosphate + L-glutamate</text>
        <dbReference type="Rhea" id="RHEA:23744"/>
        <dbReference type="ChEBI" id="CHEBI:16810"/>
        <dbReference type="ChEBI" id="CHEBI:29985"/>
        <dbReference type="ChEBI" id="CHEBI:57766"/>
        <dbReference type="ChEBI" id="CHEBI:57980"/>
        <dbReference type="EC" id="2.6.1.9"/>
    </reaction>
</comment>
<comment type="cofactor">
    <cofactor evidence="1">
        <name>pyridoxal 5'-phosphate</name>
        <dbReference type="ChEBI" id="CHEBI:597326"/>
    </cofactor>
</comment>
<comment type="pathway">
    <text evidence="1">Amino-acid biosynthesis; L-histidine biosynthesis; L-histidine from 5-phospho-alpha-D-ribose 1-diphosphate: step 7/9.</text>
</comment>
<comment type="subunit">
    <text evidence="1">Homodimer.</text>
</comment>
<comment type="similarity">
    <text evidence="1">Belongs to the class-II pyridoxal-phosphate-dependent aminotransferase family. Histidinol-phosphate aminotransferase subfamily.</text>
</comment>
<proteinExistence type="inferred from homology"/>
<evidence type="ECO:0000255" key="1">
    <source>
        <dbReference type="HAMAP-Rule" id="MF_01023"/>
    </source>
</evidence>